<dbReference type="EMBL" id="AE016822">
    <property type="protein sequence ID" value="AAT88734.1"/>
    <property type="molecule type" value="Genomic_DNA"/>
</dbReference>
<dbReference type="RefSeq" id="WP_011185732.1">
    <property type="nucleotide sequence ID" value="NC_006087.1"/>
</dbReference>
<dbReference type="SMR" id="Q6AFW1"/>
<dbReference type="STRING" id="281090.Lxx08320"/>
<dbReference type="KEGG" id="lxx:Lxx08320"/>
<dbReference type="eggNOG" id="COG1826">
    <property type="taxonomic scope" value="Bacteria"/>
</dbReference>
<dbReference type="HOGENOM" id="CLU_086034_4_4_11"/>
<dbReference type="Proteomes" id="UP000001306">
    <property type="component" value="Chromosome"/>
</dbReference>
<dbReference type="GO" id="GO:0033281">
    <property type="term" value="C:TAT protein transport complex"/>
    <property type="evidence" value="ECO:0007669"/>
    <property type="project" value="UniProtKB-UniRule"/>
</dbReference>
<dbReference type="GO" id="GO:0008320">
    <property type="term" value="F:protein transmembrane transporter activity"/>
    <property type="evidence" value="ECO:0007669"/>
    <property type="project" value="UniProtKB-UniRule"/>
</dbReference>
<dbReference type="GO" id="GO:0043953">
    <property type="term" value="P:protein transport by the Tat complex"/>
    <property type="evidence" value="ECO:0007669"/>
    <property type="project" value="UniProtKB-UniRule"/>
</dbReference>
<dbReference type="Gene3D" id="1.20.5.3310">
    <property type="match status" value="1"/>
</dbReference>
<dbReference type="HAMAP" id="MF_00236">
    <property type="entry name" value="TatA_E"/>
    <property type="match status" value="1"/>
</dbReference>
<dbReference type="InterPro" id="IPR003369">
    <property type="entry name" value="TatA/B/E"/>
</dbReference>
<dbReference type="InterPro" id="IPR006312">
    <property type="entry name" value="TatA/E"/>
</dbReference>
<dbReference type="NCBIfam" id="NF001854">
    <property type="entry name" value="PRK00575.1"/>
    <property type="match status" value="1"/>
</dbReference>
<dbReference type="NCBIfam" id="TIGR01411">
    <property type="entry name" value="tatAE"/>
    <property type="match status" value="1"/>
</dbReference>
<dbReference type="PANTHER" id="PTHR42982">
    <property type="entry name" value="SEC-INDEPENDENT PROTEIN TRANSLOCASE PROTEIN TATA"/>
    <property type="match status" value="1"/>
</dbReference>
<dbReference type="PANTHER" id="PTHR42982:SF1">
    <property type="entry name" value="SEC-INDEPENDENT PROTEIN TRANSLOCASE PROTEIN TATA"/>
    <property type="match status" value="1"/>
</dbReference>
<dbReference type="Pfam" id="PF02416">
    <property type="entry name" value="TatA_B_E"/>
    <property type="match status" value="1"/>
</dbReference>
<accession>Q6AFW1</accession>
<proteinExistence type="inferred from homology"/>
<keyword id="KW-1003">Cell membrane</keyword>
<keyword id="KW-0472">Membrane</keyword>
<keyword id="KW-0653">Protein transport</keyword>
<keyword id="KW-1185">Reference proteome</keyword>
<keyword id="KW-0811">Translocation</keyword>
<keyword id="KW-0812">Transmembrane</keyword>
<keyword id="KW-1133">Transmembrane helix</keyword>
<keyword id="KW-0813">Transport</keyword>
<evidence type="ECO:0000255" key="1">
    <source>
        <dbReference type="HAMAP-Rule" id="MF_00236"/>
    </source>
</evidence>
<evidence type="ECO:0000256" key="2">
    <source>
        <dbReference type="SAM" id="MobiDB-lite"/>
    </source>
</evidence>
<gene>
    <name evidence="1" type="primary">tatA</name>
    <name type="ordered locus">Lxx08320</name>
</gene>
<organism>
    <name type="scientific">Leifsonia xyli subsp. xyli (strain CTCB07)</name>
    <dbReference type="NCBI Taxonomy" id="281090"/>
    <lineage>
        <taxon>Bacteria</taxon>
        <taxon>Bacillati</taxon>
        <taxon>Actinomycetota</taxon>
        <taxon>Actinomycetes</taxon>
        <taxon>Micrococcales</taxon>
        <taxon>Microbacteriaceae</taxon>
        <taxon>Leifsonia</taxon>
    </lineage>
</organism>
<comment type="function">
    <text evidence="1">Part of the twin-arginine translocation (Tat) system that transports large folded proteins containing a characteristic twin-arginine motif in their signal peptide across membranes. TatA could form the protein-conducting channel of the Tat system.</text>
</comment>
<comment type="subunit">
    <text evidence="1">The Tat system comprises two distinct complexes: a TatABC complex, containing multiple copies of TatA, TatB and TatC subunits, and a separate TatA complex, containing only TatA subunits. Substrates initially bind to the TatABC complex, which probably triggers association of the separate TatA complex to form the active translocon.</text>
</comment>
<comment type="subcellular location">
    <subcellularLocation>
        <location evidence="1">Cell membrane</location>
        <topology evidence="1">Single-pass membrane protein</topology>
    </subcellularLocation>
</comment>
<comment type="similarity">
    <text evidence="1">Belongs to the TatA/E family.</text>
</comment>
<feature type="chain" id="PRO_0000097941" description="Sec-independent protein translocase protein TatA">
    <location>
        <begin position="1"/>
        <end position="76"/>
    </location>
</feature>
<feature type="transmembrane region" description="Helical" evidence="1">
    <location>
        <begin position="1"/>
        <end position="21"/>
    </location>
</feature>
<feature type="region of interest" description="Disordered" evidence="2">
    <location>
        <begin position="44"/>
        <end position="76"/>
    </location>
</feature>
<feature type="compositionally biased region" description="Basic and acidic residues" evidence="2">
    <location>
        <begin position="44"/>
        <end position="57"/>
    </location>
</feature>
<feature type="compositionally biased region" description="Polar residues" evidence="2">
    <location>
        <begin position="62"/>
        <end position="76"/>
    </location>
</feature>
<name>TATA_LEIXX</name>
<reference key="1">
    <citation type="journal article" date="2004" name="Mol. Plant Microbe Interact.">
        <title>The genome sequence of the Gram-positive sugarcane pathogen Leifsonia xyli subsp. xyli.</title>
        <authorList>
            <person name="Monteiro-Vitorello C.B."/>
            <person name="Camargo L.E.A."/>
            <person name="Van Sluys M.A."/>
            <person name="Kitajima J.P."/>
            <person name="Truffi D."/>
            <person name="do Amaral A.M."/>
            <person name="Harakava R."/>
            <person name="de Oliveira J.C.F."/>
            <person name="Wood D."/>
            <person name="de Oliveira M.C."/>
            <person name="Miyaki C.Y."/>
            <person name="Takita M.A."/>
            <person name="da Silva A.C.R."/>
            <person name="Furlan L.R."/>
            <person name="Carraro D.M."/>
            <person name="Camarotte G."/>
            <person name="Almeida N.F. Jr."/>
            <person name="Carrer H."/>
            <person name="Coutinho L.L."/>
            <person name="El-Dorry H.A."/>
            <person name="Ferro M.I.T."/>
            <person name="Gagliardi P.R."/>
            <person name="Giglioti E."/>
            <person name="Goldman M.H.S."/>
            <person name="Goldman G.H."/>
            <person name="Kimura E.T."/>
            <person name="Ferro E.S."/>
            <person name="Kuramae E.E."/>
            <person name="Lemos E.G.M."/>
            <person name="Lemos M.V.F."/>
            <person name="Mauro S.M.Z."/>
            <person name="Machado M.A."/>
            <person name="Marino C.L."/>
            <person name="Menck C.F."/>
            <person name="Nunes L.R."/>
            <person name="Oliveira R.C."/>
            <person name="Pereira G.G."/>
            <person name="Siqueira W."/>
            <person name="de Souza A.A."/>
            <person name="Tsai S.M."/>
            <person name="Zanca A.S."/>
            <person name="Simpson A.J.G."/>
            <person name="Brumbley S.M."/>
            <person name="Setubal J.C."/>
        </authorList>
    </citation>
    <scope>NUCLEOTIDE SEQUENCE [LARGE SCALE GENOMIC DNA]</scope>
    <source>
        <strain>CTCB07</strain>
    </source>
</reference>
<sequence>MLGGLTGWHLLIILAVILLLFGAPKLPALAKSVGQSMRIFKGEVNEMKKDGDKDKGEGGSTAPATDTGASSEQNSK</sequence>
<protein>
    <recommendedName>
        <fullName evidence="1">Sec-independent protein translocase protein TatA</fullName>
    </recommendedName>
</protein>